<proteinExistence type="inferred from homology"/>
<evidence type="ECO:0000255" key="1">
    <source>
        <dbReference type="HAMAP-Rule" id="MF_00058"/>
    </source>
</evidence>
<protein>
    <recommendedName>
        <fullName evidence="1">F420-dependent methylenetetrahydromethanopterin dehydrogenase</fullName>
        <shortName evidence="1">MTD</shortName>
        <ecNumber evidence="1">1.5.98.1</ecNumber>
    </recommendedName>
    <alternativeName>
        <fullName evidence="1">Coenzyme F420-dependent N5,N10-methylenetetrahydromethanopterin dehydrogenase</fullName>
    </alternativeName>
</protein>
<reference key="1">
    <citation type="submission" date="2007-03" db="EMBL/GenBank/DDBJ databases">
        <title>Complete sequence of chromosome of Methanococcus maripaludis C5.</title>
        <authorList>
            <consortium name="US DOE Joint Genome Institute"/>
            <person name="Copeland A."/>
            <person name="Lucas S."/>
            <person name="Lapidus A."/>
            <person name="Barry K."/>
            <person name="Glavina del Rio T."/>
            <person name="Dalin E."/>
            <person name="Tice H."/>
            <person name="Pitluck S."/>
            <person name="Chertkov O."/>
            <person name="Brettin T."/>
            <person name="Bruce D."/>
            <person name="Han C."/>
            <person name="Detter J.C."/>
            <person name="Schmutz J."/>
            <person name="Larimer F."/>
            <person name="Land M."/>
            <person name="Hauser L."/>
            <person name="Kyrpides N."/>
            <person name="Mikhailova N."/>
            <person name="Sieprawska-Lupa M."/>
            <person name="Whitman W.B."/>
            <person name="Richardson P."/>
        </authorList>
    </citation>
    <scope>NUCLEOTIDE SEQUENCE [LARGE SCALE GENOMIC DNA]</scope>
    <source>
        <strain>C5 / ATCC BAA-1333</strain>
    </source>
</reference>
<comment type="function">
    <text evidence="1">Catalyzes the reversible reduction of methenyl-H(4)MPT(+) to methylene-H(4)MPT.</text>
</comment>
<comment type="catalytic activity">
    <reaction evidence="1">
        <text>5,10-methylenetetrahydromethanopterin + oxidized coenzyme F420-(gamma-L-Glu)(n) + 2 H(+) = 5,10-methenyl-5,6,7,8-tetrahydromethanopterin + reduced coenzyme F420-(gamma-L-Glu)(n)</text>
        <dbReference type="Rhea" id="RHEA:16721"/>
        <dbReference type="Rhea" id="RHEA-COMP:12939"/>
        <dbReference type="Rhea" id="RHEA-COMP:14378"/>
        <dbReference type="ChEBI" id="CHEBI:15378"/>
        <dbReference type="ChEBI" id="CHEBI:57818"/>
        <dbReference type="ChEBI" id="CHEBI:58337"/>
        <dbReference type="ChEBI" id="CHEBI:133980"/>
        <dbReference type="ChEBI" id="CHEBI:139511"/>
        <dbReference type="EC" id="1.5.98.1"/>
    </reaction>
</comment>
<comment type="pathway">
    <text evidence="1">One-carbon metabolism; methanogenesis from CO(2); 5,10-methylene-5,6,7,8-tetrahydromethanopterin from 5,10-methenyl-5,6,7,8-tetrahydromethanopterin (coenzyme F420 route): step 1/1.</text>
</comment>
<comment type="similarity">
    <text evidence="1">Belongs to the MTD family.</text>
</comment>
<sequence>MVVKIGILKCGNIGMSPVVDLCLDERADRNDIDVRVLGSGAKMNPDQVEEVAKKMVEEVKPDFIVYIGPNPAAPGPKKAREILSAGGIPAVIIGDAPGIKDKDAMAEEGLGYVLIKCDPMIGARRQFLDPVEMAMFNADVIRVLAGTGALRVVQNAIDDMVFAVEEGKEIPLPKIVITEQKAVEAMDFANPYAKAKAMAAFVMAEKVADIDVKGCFMTKEMEKYIPIVASAHETIRYAAKLVDEARELEKATDAVSRKPHAGAGQILNKCKLMEKPE</sequence>
<dbReference type="EC" id="1.5.98.1" evidence="1"/>
<dbReference type="EMBL" id="CP000609">
    <property type="protein sequence ID" value="ABO35601.1"/>
    <property type="molecule type" value="Genomic_DNA"/>
</dbReference>
<dbReference type="RefSeq" id="WP_011869052.1">
    <property type="nucleotide sequence ID" value="NC_009135.1"/>
</dbReference>
<dbReference type="SMR" id="A4FZG7"/>
<dbReference type="STRING" id="402880.MmarC5_1303"/>
<dbReference type="GeneID" id="4929158"/>
<dbReference type="KEGG" id="mmq:MmarC5_1303"/>
<dbReference type="eggNOG" id="arCOG04382">
    <property type="taxonomic scope" value="Archaea"/>
</dbReference>
<dbReference type="HOGENOM" id="CLU_1006890_0_0_2"/>
<dbReference type="OrthoDB" id="49844at2157"/>
<dbReference type="UniPathway" id="UPA00640">
    <property type="reaction ID" value="UER00695"/>
</dbReference>
<dbReference type="Proteomes" id="UP000000253">
    <property type="component" value="Chromosome"/>
</dbReference>
<dbReference type="GO" id="GO:0008901">
    <property type="term" value="F:ferredoxin hydrogenase activity"/>
    <property type="evidence" value="ECO:0007669"/>
    <property type="project" value="InterPro"/>
</dbReference>
<dbReference type="GO" id="GO:0030268">
    <property type="term" value="F:methylenetetrahydromethanopterin dehydrogenase activity"/>
    <property type="evidence" value="ECO:0007669"/>
    <property type="project" value="UniProtKB-UniRule"/>
</dbReference>
<dbReference type="GO" id="GO:0019386">
    <property type="term" value="P:methanogenesis, from carbon dioxide"/>
    <property type="evidence" value="ECO:0007669"/>
    <property type="project" value="UniProtKB-UniRule"/>
</dbReference>
<dbReference type="GO" id="GO:0006730">
    <property type="term" value="P:one-carbon metabolic process"/>
    <property type="evidence" value="ECO:0007669"/>
    <property type="project" value="UniProtKB-UniRule"/>
</dbReference>
<dbReference type="Gene3D" id="6.10.140.120">
    <property type="match status" value="1"/>
</dbReference>
<dbReference type="Gene3D" id="3.40.50.10830">
    <property type="entry name" value="F420-dependent methylenetetrahydromethanopterin dehydrogenase (MTD)"/>
    <property type="match status" value="1"/>
</dbReference>
<dbReference type="HAMAP" id="MF_00058">
    <property type="entry name" value="MTD"/>
    <property type="match status" value="1"/>
</dbReference>
<dbReference type="InterPro" id="IPR002844">
    <property type="entry name" value="MTD"/>
</dbReference>
<dbReference type="InterPro" id="IPR036080">
    <property type="entry name" value="MTD_sf"/>
</dbReference>
<dbReference type="NCBIfam" id="NF002162">
    <property type="entry name" value="PRK00994.1"/>
    <property type="match status" value="1"/>
</dbReference>
<dbReference type="Pfam" id="PF01993">
    <property type="entry name" value="MTD"/>
    <property type="match status" value="1"/>
</dbReference>
<dbReference type="PIRSF" id="PIRSF005627">
    <property type="entry name" value="MTD"/>
    <property type="match status" value="1"/>
</dbReference>
<dbReference type="SUPFAM" id="SSF102324">
    <property type="entry name" value="F420-dependent methylenetetrahydromethanopterin dehydrogenase (MTD)"/>
    <property type="match status" value="1"/>
</dbReference>
<keyword id="KW-0484">Methanogenesis</keyword>
<keyword id="KW-0554">One-carbon metabolism</keyword>
<keyword id="KW-0560">Oxidoreductase</keyword>
<feature type="chain" id="PRO_1000007671" description="F420-dependent methylenetetrahydromethanopterin dehydrogenase">
    <location>
        <begin position="1"/>
        <end position="277"/>
    </location>
</feature>
<organism>
    <name type="scientific">Methanococcus maripaludis (strain C5 / ATCC BAA-1333)</name>
    <dbReference type="NCBI Taxonomy" id="402880"/>
    <lineage>
        <taxon>Archaea</taxon>
        <taxon>Methanobacteriati</taxon>
        <taxon>Methanobacteriota</taxon>
        <taxon>Methanomada group</taxon>
        <taxon>Methanococci</taxon>
        <taxon>Methanococcales</taxon>
        <taxon>Methanococcaceae</taxon>
        <taxon>Methanococcus</taxon>
    </lineage>
</organism>
<accession>A4FZG7</accession>
<name>MTD_METM5</name>
<gene>
    <name evidence="1" type="primary">mtd</name>
    <name type="ordered locus">MmarC5_1303</name>
</gene>